<dbReference type="EC" id="5.4.2.10" evidence="1"/>
<dbReference type="EMBL" id="AL513382">
    <property type="protein sequence ID" value="CAD07811.1"/>
    <property type="molecule type" value="Genomic_DNA"/>
</dbReference>
<dbReference type="EMBL" id="AE014613">
    <property type="protein sequence ID" value="AAO70747.1"/>
    <property type="molecule type" value="Genomic_DNA"/>
</dbReference>
<dbReference type="RefSeq" id="NP_457673.1">
    <property type="nucleotide sequence ID" value="NC_003198.1"/>
</dbReference>
<dbReference type="RefSeq" id="WP_000071169.1">
    <property type="nucleotide sequence ID" value="NZ_WSUR01000003.1"/>
</dbReference>
<dbReference type="SMR" id="Q8XF81"/>
<dbReference type="STRING" id="220341.gene:17587324"/>
<dbReference type="KEGG" id="stt:t3211"/>
<dbReference type="KEGG" id="sty:STY3472"/>
<dbReference type="PATRIC" id="fig|220341.7.peg.3534"/>
<dbReference type="eggNOG" id="COG1109">
    <property type="taxonomic scope" value="Bacteria"/>
</dbReference>
<dbReference type="HOGENOM" id="CLU_016950_7_0_6"/>
<dbReference type="OMA" id="SHNAMPD"/>
<dbReference type="OrthoDB" id="9803322at2"/>
<dbReference type="Proteomes" id="UP000000541">
    <property type="component" value="Chromosome"/>
</dbReference>
<dbReference type="Proteomes" id="UP000002670">
    <property type="component" value="Chromosome"/>
</dbReference>
<dbReference type="GO" id="GO:0005829">
    <property type="term" value="C:cytosol"/>
    <property type="evidence" value="ECO:0007669"/>
    <property type="project" value="TreeGrafter"/>
</dbReference>
<dbReference type="GO" id="GO:0000287">
    <property type="term" value="F:magnesium ion binding"/>
    <property type="evidence" value="ECO:0007669"/>
    <property type="project" value="UniProtKB-UniRule"/>
</dbReference>
<dbReference type="GO" id="GO:0008966">
    <property type="term" value="F:phosphoglucosamine mutase activity"/>
    <property type="evidence" value="ECO:0007669"/>
    <property type="project" value="UniProtKB-UniRule"/>
</dbReference>
<dbReference type="GO" id="GO:0004615">
    <property type="term" value="F:phosphomannomutase activity"/>
    <property type="evidence" value="ECO:0007669"/>
    <property type="project" value="TreeGrafter"/>
</dbReference>
<dbReference type="GO" id="GO:0005975">
    <property type="term" value="P:carbohydrate metabolic process"/>
    <property type="evidence" value="ECO:0007669"/>
    <property type="project" value="InterPro"/>
</dbReference>
<dbReference type="GO" id="GO:0009252">
    <property type="term" value="P:peptidoglycan biosynthetic process"/>
    <property type="evidence" value="ECO:0007669"/>
    <property type="project" value="TreeGrafter"/>
</dbReference>
<dbReference type="GO" id="GO:0006048">
    <property type="term" value="P:UDP-N-acetylglucosamine biosynthetic process"/>
    <property type="evidence" value="ECO:0007669"/>
    <property type="project" value="TreeGrafter"/>
</dbReference>
<dbReference type="CDD" id="cd05802">
    <property type="entry name" value="GlmM"/>
    <property type="match status" value="1"/>
</dbReference>
<dbReference type="FunFam" id="3.30.310.50:FF:000001">
    <property type="entry name" value="Phosphoglucosamine mutase"/>
    <property type="match status" value="1"/>
</dbReference>
<dbReference type="FunFam" id="3.40.120.10:FF:000001">
    <property type="entry name" value="Phosphoglucosamine mutase"/>
    <property type="match status" value="1"/>
</dbReference>
<dbReference type="FunFam" id="3.40.120.10:FF:000002">
    <property type="entry name" value="Phosphoglucosamine mutase"/>
    <property type="match status" value="1"/>
</dbReference>
<dbReference type="Gene3D" id="3.40.120.10">
    <property type="entry name" value="Alpha-D-Glucose-1,6-Bisphosphate, subunit A, domain 3"/>
    <property type="match status" value="3"/>
</dbReference>
<dbReference type="Gene3D" id="3.30.310.50">
    <property type="entry name" value="Alpha-D-phosphohexomutase, C-terminal domain"/>
    <property type="match status" value="1"/>
</dbReference>
<dbReference type="HAMAP" id="MF_01554_B">
    <property type="entry name" value="GlmM_B"/>
    <property type="match status" value="1"/>
</dbReference>
<dbReference type="InterPro" id="IPR005844">
    <property type="entry name" value="A-D-PHexomutase_a/b/a-I"/>
</dbReference>
<dbReference type="InterPro" id="IPR016055">
    <property type="entry name" value="A-D-PHexomutase_a/b/a-I/II/III"/>
</dbReference>
<dbReference type="InterPro" id="IPR005845">
    <property type="entry name" value="A-D-PHexomutase_a/b/a-II"/>
</dbReference>
<dbReference type="InterPro" id="IPR005846">
    <property type="entry name" value="A-D-PHexomutase_a/b/a-III"/>
</dbReference>
<dbReference type="InterPro" id="IPR005843">
    <property type="entry name" value="A-D-PHexomutase_C"/>
</dbReference>
<dbReference type="InterPro" id="IPR036900">
    <property type="entry name" value="A-D-PHexomutase_C_sf"/>
</dbReference>
<dbReference type="InterPro" id="IPR016066">
    <property type="entry name" value="A-D-PHexomutase_CS"/>
</dbReference>
<dbReference type="InterPro" id="IPR005841">
    <property type="entry name" value="Alpha-D-phosphohexomutase_SF"/>
</dbReference>
<dbReference type="InterPro" id="IPR006352">
    <property type="entry name" value="GlmM_bact"/>
</dbReference>
<dbReference type="InterPro" id="IPR050060">
    <property type="entry name" value="Phosphoglucosamine_mutase"/>
</dbReference>
<dbReference type="NCBIfam" id="TIGR01455">
    <property type="entry name" value="glmM"/>
    <property type="match status" value="1"/>
</dbReference>
<dbReference type="NCBIfam" id="NF008139">
    <property type="entry name" value="PRK10887.1"/>
    <property type="match status" value="1"/>
</dbReference>
<dbReference type="PANTHER" id="PTHR42946:SF1">
    <property type="entry name" value="PHOSPHOGLUCOMUTASE (ALPHA-D-GLUCOSE-1,6-BISPHOSPHATE-DEPENDENT)"/>
    <property type="match status" value="1"/>
</dbReference>
<dbReference type="PANTHER" id="PTHR42946">
    <property type="entry name" value="PHOSPHOHEXOSE MUTASE"/>
    <property type="match status" value="1"/>
</dbReference>
<dbReference type="Pfam" id="PF02878">
    <property type="entry name" value="PGM_PMM_I"/>
    <property type="match status" value="1"/>
</dbReference>
<dbReference type="Pfam" id="PF02879">
    <property type="entry name" value="PGM_PMM_II"/>
    <property type="match status" value="1"/>
</dbReference>
<dbReference type="Pfam" id="PF02880">
    <property type="entry name" value="PGM_PMM_III"/>
    <property type="match status" value="1"/>
</dbReference>
<dbReference type="Pfam" id="PF00408">
    <property type="entry name" value="PGM_PMM_IV"/>
    <property type="match status" value="1"/>
</dbReference>
<dbReference type="PRINTS" id="PR00509">
    <property type="entry name" value="PGMPMM"/>
</dbReference>
<dbReference type="SUPFAM" id="SSF55957">
    <property type="entry name" value="Phosphoglucomutase, C-terminal domain"/>
    <property type="match status" value="1"/>
</dbReference>
<dbReference type="SUPFAM" id="SSF53738">
    <property type="entry name" value="Phosphoglucomutase, first 3 domains"/>
    <property type="match status" value="3"/>
</dbReference>
<dbReference type="PROSITE" id="PS00710">
    <property type="entry name" value="PGM_PMM"/>
    <property type="match status" value="1"/>
</dbReference>
<evidence type="ECO:0000255" key="1">
    <source>
        <dbReference type="HAMAP-Rule" id="MF_01554"/>
    </source>
</evidence>
<organism>
    <name type="scientific">Salmonella typhi</name>
    <dbReference type="NCBI Taxonomy" id="90370"/>
    <lineage>
        <taxon>Bacteria</taxon>
        <taxon>Pseudomonadati</taxon>
        <taxon>Pseudomonadota</taxon>
        <taxon>Gammaproteobacteria</taxon>
        <taxon>Enterobacterales</taxon>
        <taxon>Enterobacteriaceae</taxon>
        <taxon>Salmonella</taxon>
    </lineage>
</organism>
<keyword id="KW-0413">Isomerase</keyword>
<keyword id="KW-0460">Magnesium</keyword>
<keyword id="KW-0479">Metal-binding</keyword>
<keyword id="KW-0597">Phosphoprotein</keyword>
<name>GLMM_SALTI</name>
<sequence length="445" mass="47441">MSNRKYFGTDGIRGRVGNAPITPDFVLKLGWAAGKVLARHGSRKIIIGKDTRISGYMLESALEAGLAAAGLSASFTGPMPTPAVAYLTRTFRAEAGIVISASHNPFYDNGIKFFSIDGTKLPDDVEEAIEAEMEKEITCVDSAELGKASRIVDAAGRYIEFCKGTFPNELSLNGLKVVVDCANGATYHIAPNVLRELGATVIAIGCEPNGVNINEEVGATDVRALQARVLAEKADLGIALDGDGDRVIMVDHEGNKVDGDQIMYIIAREGLRQGQLRGGAVGTLMSNMGLELALKQLGIPFARAKVGDRYVLEKLQEKGWRIGAENSGHVILLDKTTTGDGIVAGLQVLAAMVRNHMSLHDLCSGMKMFPQILVNVRYTAGSGDPLENEAVKAVTADVEATLGNRGRVLLRKSGTEPLIRVMVEGEDEAQVTAFAHRIADAVKAV</sequence>
<gene>
    <name evidence="1" type="primary">glmM</name>
    <name type="ordered locus">STY3472</name>
    <name type="ordered locus">t3211</name>
</gene>
<accession>Q8XF81</accession>
<accession>Q7AM71</accession>
<reference key="1">
    <citation type="journal article" date="2001" name="Nature">
        <title>Complete genome sequence of a multiple drug resistant Salmonella enterica serovar Typhi CT18.</title>
        <authorList>
            <person name="Parkhill J."/>
            <person name="Dougan G."/>
            <person name="James K.D."/>
            <person name="Thomson N.R."/>
            <person name="Pickard D."/>
            <person name="Wain J."/>
            <person name="Churcher C.M."/>
            <person name="Mungall K.L."/>
            <person name="Bentley S.D."/>
            <person name="Holden M.T.G."/>
            <person name="Sebaihia M."/>
            <person name="Baker S."/>
            <person name="Basham D."/>
            <person name="Brooks K."/>
            <person name="Chillingworth T."/>
            <person name="Connerton P."/>
            <person name="Cronin A."/>
            <person name="Davis P."/>
            <person name="Davies R.M."/>
            <person name="Dowd L."/>
            <person name="White N."/>
            <person name="Farrar J."/>
            <person name="Feltwell T."/>
            <person name="Hamlin N."/>
            <person name="Haque A."/>
            <person name="Hien T.T."/>
            <person name="Holroyd S."/>
            <person name="Jagels K."/>
            <person name="Krogh A."/>
            <person name="Larsen T.S."/>
            <person name="Leather S."/>
            <person name="Moule S."/>
            <person name="O'Gaora P."/>
            <person name="Parry C."/>
            <person name="Quail M.A."/>
            <person name="Rutherford K.M."/>
            <person name="Simmonds M."/>
            <person name="Skelton J."/>
            <person name="Stevens K."/>
            <person name="Whitehead S."/>
            <person name="Barrell B.G."/>
        </authorList>
    </citation>
    <scope>NUCLEOTIDE SEQUENCE [LARGE SCALE GENOMIC DNA]</scope>
    <source>
        <strain>CT18</strain>
    </source>
</reference>
<reference key="2">
    <citation type="journal article" date="2003" name="J. Bacteriol.">
        <title>Comparative genomics of Salmonella enterica serovar Typhi strains Ty2 and CT18.</title>
        <authorList>
            <person name="Deng W."/>
            <person name="Liou S.-R."/>
            <person name="Plunkett G. III"/>
            <person name="Mayhew G.F."/>
            <person name="Rose D.J."/>
            <person name="Burland V."/>
            <person name="Kodoyianni V."/>
            <person name="Schwartz D.C."/>
            <person name="Blattner F.R."/>
        </authorList>
    </citation>
    <scope>NUCLEOTIDE SEQUENCE [LARGE SCALE GENOMIC DNA]</scope>
    <source>
        <strain>ATCC 700931 / Ty2</strain>
    </source>
</reference>
<protein>
    <recommendedName>
        <fullName evidence="1">Phosphoglucosamine mutase</fullName>
        <ecNumber evidence="1">5.4.2.10</ecNumber>
    </recommendedName>
</protein>
<feature type="chain" id="PRO_0000147952" description="Phosphoglucosamine mutase">
    <location>
        <begin position="1"/>
        <end position="445"/>
    </location>
</feature>
<feature type="active site" description="Phosphoserine intermediate" evidence="1">
    <location>
        <position position="102"/>
    </location>
</feature>
<feature type="binding site" description="via phosphate group" evidence="1">
    <location>
        <position position="102"/>
    </location>
    <ligand>
        <name>Mg(2+)</name>
        <dbReference type="ChEBI" id="CHEBI:18420"/>
    </ligand>
</feature>
<feature type="binding site" evidence="1">
    <location>
        <position position="241"/>
    </location>
    <ligand>
        <name>Mg(2+)</name>
        <dbReference type="ChEBI" id="CHEBI:18420"/>
    </ligand>
</feature>
<feature type="binding site" evidence="1">
    <location>
        <position position="243"/>
    </location>
    <ligand>
        <name>Mg(2+)</name>
        <dbReference type="ChEBI" id="CHEBI:18420"/>
    </ligand>
</feature>
<feature type="binding site" evidence="1">
    <location>
        <position position="245"/>
    </location>
    <ligand>
        <name>Mg(2+)</name>
        <dbReference type="ChEBI" id="CHEBI:18420"/>
    </ligand>
</feature>
<feature type="modified residue" description="Phosphoserine" evidence="1">
    <location>
        <position position="102"/>
    </location>
</feature>
<proteinExistence type="inferred from homology"/>
<comment type="function">
    <text evidence="1">Catalyzes the conversion of glucosamine-6-phosphate to glucosamine-1-phosphate.</text>
</comment>
<comment type="catalytic activity">
    <reaction evidence="1">
        <text>alpha-D-glucosamine 1-phosphate = D-glucosamine 6-phosphate</text>
        <dbReference type="Rhea" id="RHEA:23424"/>
        <dbReference type="ChEBI" id="CHEBI:58516"/>
        <dbReference type="ChEBI" id="CHEBI:58725"/>
        <dbReference type="EC" id="5.4.2.10"/>
    </reaction>
</comment>
<comment type="cofactor">
    <cofactor evidence="1">
        <name>Mg(2+)</name>
        <dbReference type="ChEBI" id="CHEBI:18420"/>
    </cofactor>
    <text evidence="1">Binds 1 Mg(2+) ion per subunit.</text>
</comment>
<comment type="PTM">
    <text evidence="1">Activated by phosphorylation.</text>
</comment>
<comment type="similarity">
    <text evidence="1">Belongs to the phosphohexose mutase family.</text>
</comment>